<organism>
    <name type="scientific">Human parainfluenza 3 virus (strain Wash/47885/57)</name>
    <name type="common">HPIV-3</name>
    <name type="synonym">Human parainfluenza 3 virus (strain NIH 47885)</name>
    <dbReference type="NCBI Taxonomy" id="11217"/>
    <lineage>
        <taxon>Viruses</taxon>
        <taxon>Riboviria</taxon>
        <taxon>Orthornavirae</taxon>
        <taxon>Negarnaviricota</taxon>
        <taxon>Haploviricotina</taxon>
        <taxon>Monjiviricetes</taxon>
        <taxon>Mononegavirales</taxon>
        <taxon>Paramyxoviridae</taxon>
        <taxon>Feraresvirinae</taxon>
        <taxon>Respirovirus</taxon>
        <taxon>Respirovirus pneumoniae</taxon>
    </lineage>
</organism>
<gene>
    <name type="primary">P/V/D</name>
</gene>
<dbReference type="EMBL" id="M14890">
    <property type="protein sequence ID" value="AAA46866.1"/>
    <property type="status" value="ALT_SEQ"/>
    <property type="molecule type" value="Genomic_RNA"/>
</dbReference>
<dbReference type="EMBL" id="X04721">
    <property type="protein sequence ID" value="CAA28429.1"/>
    <property type="molecule type" value="Genomic_RNA"/>
</dbReference>
<dbReference type="EMBL" id="M14932">
    <property type="protein sequence ID" value="AAA66818.1"/>
    <property type="molecule type" value="Genomic_RNA"/>
</dbReference>
<dbReference type="EMBL" id="D10029">
    <property type="protein sequence ID" value="BAA00921.1"/>
    <property type="status" value="ALT_SEQ"/>
    <property type="molecule type" value="mRNA"/>
</dbReference>
<dbReference type="PIR" id="A94355">
    <property type="entry name" value="RRNZP4"/>
</dbReference>
<dbReference type="PDB" id="7EV8">
    <property type="method" value="X-ray"/>
    <property type="resolution" value="3.23 A"/>
    <property type="chains" value="B=1-42"/>
</dbReference>
<dbReference type="PDBsum" id="7EV8"/>
<dbReference type="SMR" id="P06162"/>
<dbReference type="DIP" id="DIP-616N"/>
<dbReference type="GO" id="GO:0003723">
    <property type="term" value="F:RNA binding"/>
    <property type="evidence" value="ECO:0007669"/>
    <property type="project" value="InterPro"/>
</dbReference>
<dbReference type="GO" id="GO:0003968">
    <property type="term" value="F:RNA-directed RNA polymerase activity"/>
    <property type="evidence" value="ECO:0007669"/>
    <property type="project" value="InterPro"/>
</dbReference>
<dbReference type="GO" id="GO:0006351">
    <property type="term" value="P:DNA-templated transcription"/>
    <property type="evidence" value="ECO:0007669"/>
    <property type="project" value="InterPro"/>
</dbReference>
<dbReference type="GO" id="GO:0019079">
    <property type="term" value="P:viral genome replication"/>
    <property type="evidence" value="ECO:0007669"/>
    <property type="project" value="InterPro"/>
</dbReference>
<dbReference type="Gene3D" id="1.10.8.10">
    <property type="entry name" value="DNA helicase RuvA subunit, C-terminal domain"/>
    <property type="match status" value="1"/>
</dbReference>
<dbReference type="InterPro" id="IPR002693">
    <property type="entry name" value="Paramyxo_PProtein_C"/>
</dbReference>
<dbReference type="InterPro" id="IPR016075">
    <property type="entry name" value="RNA_pol_Pprot-P_XD_paramyxovir"/>
</dbReference>
<dbReference type="Pfam" id="PF01806">
    <property type="entry name" value="Paramyxo_P"/>
    <property type="match status" value="1"/>
</dbReference>
<dbReference type="SUPFAM" id="SSF58034">
    <property type="entry name" value="Multimerization domain of the phosphoprotein from sendai virus"/>
    <property type="match status" value="1"/>
</dbReference>
<dbReference type="SUPFAM" id="SSF101089">
    <property type="entry name" value="Phosphoprotein XD domain"/>
    <property type="match status" value="1"/>
</dbReference>
<comment type="function">
    <text evidence="3 6 7 8 9">Essential cofactor of the RNA polymerase L that plays a central role in the transcription and replication by forming the polymerase complex with RNA polymerase L and recruiting L to the genomic N-RNA template for RNA synthesis (PubMed:10846069). Also plays a central role in the encapsidation of nascent RNA chains by forming the encapsidation complex with the nucleocapsid protein N (N-P complex) (PubMed:10846069). Acts as a chaperone for newly synthesized free N protein, so-called N0, allowing encapsidation of nascent RNA chains during replication (PubMed:34730394). The nucleoprotein protein N prevents excessive phosphorylation of P, which leads to down-regulation of viral transcription/ replication (By similarity). Participates, together with N, in the formation of viral factories (viroplasms), which are large inclusions in the host cytoplasm where replication takes place (By similarity). Recruits host PI4KB and remodel the host endoplasmic reticulum membrane to form viral replication factories (PubMed:29518158, PubMed:31747597).</text>
</comment>
<comment type="subunit">
    <text evidence="6 8 9 10">Homotetramer (PubMed:34827601). Interacts (via multimerization domain) with polymerase L; this interaction forms the polymerase L-P complex (PubMed:10846069). Interacts (via N-terminus) with N0; this interaction allows P to chaperon N0 to avoid N polymerization before encapsidation (PubMed:10846069, PubMed:34730394). Interacts (via C-terminus) with N-RNA template; this interaction positions the polymerase on the template (PubMed:10846069). Interacts with host PI4KB; this interaction allows P to recruit PI4KB to the viral factories to generate PI4P to facilitate viral replication (PubMed:31747597).</text>
</comment>
<comment type="domain">
    <text evidence="1 3 10">The N-terminus consists of a long intrinsically disordered tail (PubMed:34827601). The central part contains the coiled-coil multimerization domain (PMD) (PubMed:34827601). Forms a four-stranded coiled coil structure (By similarity). The C-terminus constitutes the alpha-helical domain that binds to the nucleocapsid (N-RNA complex) (By similarity).</text>
</comment>
<comment type="RNA editing" locationType="Undetermined">
    <text evidence="2">Partially edited. RNA editing consists of an insertion of one to six guanine nucleotides. The sequence displayed here is the P protein, derived from the unedited RNA. The edited RNA versions give rise to the V protein and the D protein depending on the number of inserted nucleotides.</text>
</comment>
<comment type="similarity">
    <text evidence="11">Belongs to the respirovirus P protein family.</text>
</comment>
<accession>P06162</accession>
<reference key="1">
    <citation type="journal article" date="1986" name="Virology">
        <title>Messenger RNA encoding the phosphoprotein (P) gene of human parainfluenza virus 3 is bicistronic.</title>
        <authorList>
            <person name="Luk D."/>
            <person name="Sanchez A."/>
            <person name="Banerjee A.K."/>
        </authorList>
    </citation>
    <scope>NUCLEOTIDE SEQUENCE [GENOMIC RNA]</scope>
</reference>
<reference key="2">
    <citation type="journal article" date="1987" name="Virology">
        <authorList>
            <person name="Luk D."/>
            <person name="Sanchez A."/>
            <person name="Banerjee A.K."/>
        </authorList>
    </citation>
    <scope>ERRATUM OF PUBMED:3016995</scope>
    <scope>SEQUENCE REVISION</scope>
</reference>
<reference key="3">
    <citation type="journal article" date="1986" name="Virology">
        <title>Molecular cloning and sequence analysis of the human parainfluenza 3 virus mRNA encoding the P and C proteins.</title>
        <authorList>
            <person name="Galinski M.S."/>
            <person name="Mink M.A."/>
            <person name="Lambert D.M."/>
            <person name="Wechsler S.L."/>
            <person name="Pons W.M."/>
        </authorList>
    </citation>
    <scope>NUCLEOTIDE SEQUENCE [GENOMIC RNA]</scope>
</reference>
<reference key="4">
    <citation type="journal article" date="1986" name="J. Gen. Virol.">
        <title>Sequence analysis of the P and C protein genes of human parainfluenza virus type 3: patterns of amino acid sequence homology among paramyxovirus proteins.</title>
        <authorList>
            <person name="Spriggs M.K."/>
            <person name="Collins P.L."/>
        </authorList>
    </citation>
    <scope>NUCLEOTIDE SEQUENCE [MRNA]</scope>
</reference>
<reference key="5">
    <citation type="journal article" date="2000" name="J. Virol.">
        <title>Role of NH(2)- and COOH-terminal domains of the P protein of human parainfluenza virus type 3 in transcription and replication.</title>
        <authorList>
            <person name="De B.P."/>
            <person name="Hoffman M.A."/>
            <person name="Choudhary S."/>
            <person name="Huntley C.C."/>
            <person name="Banerjee A.K."/>
        </authorList>
    </citation>
    <scope>FUNCTION</scope>
    <scope>INTERACTION WITH THE NUCLEOPROTEIN</scope>
</reference>
<reference key="6">
    <citation type="journal article" date="2018" name="PLoS Pathog.">
        <title>Inclusion bodies of human parainfluenza virus type 3 inhibit antiviral stress granule formation by shielding viral RNAs.</title>
        <authorList>
            <person name="Hu Z."/>
            <person name="Wang Y."/>
            <person name="Tang Q."/>
            <person name="Yang X."/>
            <person name="Qin Y."/>
            <person name="Chen M."/>
        </authorList>
    </citation>
    <scope>FUNCTION</scope>
</reference>
<reference key="7">
    <citation type="journal article" date="2019" name="Cell Rep.">
        <title>PI4KB on Inclusion Bodies Formed by ER Membrane Remodeling Facilitates Replication of Human Parainfluenza Virus Type 3.</title>
        <authorList>
            <person name="Li Z."/>
            <person name="Guo D."/>
            <person name="Qin Y."/>
            <person name="Chen M."/>
        </authorList>
    </citation>
    <scope>INTERACTION WITH HOST PI4KB</scope>
    <scope>FUNCTION</scope>
</reference>
<reference key="8">
    <citation type="journal article" date="2021" name="Biomolecules">
        <title>Human Parainfluenza Virus 3 Phosphoprotein Is a Tetramer and Shares Structural and Interaction Features with Ebola Phosphoprotein VP35.</title>
        <authorList>
            <person name="Rodriguez Galvan J."/>
            <person name="Donner B."/>
            <person name="Veseley C.H."/>
            <person name="Reardon P."/>
            <person name="Forsythe H.M."/>
            <person name="Howe J."/>
            <person name="Fujimura G."/>
            <person name="Barbar E."/>
        </authorList>
    </citation>
    <scope>SUBUNIT</scope>
    <scope>DOMAIN</scope>
</reference>
<reference evidence="12" key="9">
    <citation type="journal article" date="2022" name="J. Virol.">
        <title>Structural Basis of Human Parainfluenza Virus 3 Unassembled Nucleoprotein in Complex with Its Viral Chaperone.</title>
        <authorList>
            <person name="Dong X."/>
            <person name="Wang X."/>
            <person name="Xie M."/>
            <person name="Wu W."/>
            <person name="Chen Z."/>
        </authorList>
    </citation>
    <scope>X-RAY CRYSTALLOGRAPHY (3.23 ANGSTROMS) OF 1-42 IN COMPLEX WITH THE NUCLEOPROTEIN</scope>
    <scope>FUNCTION</scope>
    <scope>SUBUNIT</scope>
    <scope>INTERACTION WITH THE NUCLEOPROTEIN</scope>
</reference>
<keyword id="KW-0002">3D-structure</keyword>
<keyword id="KW-0175">Coiled coil</keyword>
<keyword id="KW-0597">Phosphoprotein</keyword>
<keyword id="KW-0691">RNA editing</keyword>
<keyword id="KW-0693">Viral RNA replication</keyword>
<name>PHOSP_PI3H4</name>
<protein>
    <recommendedName>
        <fullName>Phosphoprotein</fullName>
        <shortName>Protein P</shortName>
    </recommendedName>
</protein>
<organismHost>
    <name type="scientific">Homo sapiens</name>
    <name type="common">Human</name>
    <dbReference type="NCBI Taxonomy" id="9606"/>
</organismHost>
<proteinExistence type="evidence at protein level"/>
<feature type="chain" id="PRO_0000142706" description="Phosphoprotein">
    <location>
        <begin position="1"/>
        <end position="604"/>
    </location>
</feature>
<feature type="region of interest" description="Disordered" evidence="5">
    <location>
        <begin position="1"/>
        <end position="22"/>
    </location>
</feature>
<feature type="region of interest" description="N0 binding" evidence="6 9">
    <location>
        <begin position="22"/>
        <end position="42"/>
    </location>
</feature>
<feature type="region of interest" description="Disordered" evidence="5">
    <location>
        <begin position="39"/>
        <end position="360"/>
    </location>
</feature>
<feature type="region of interest" description="Multimerization" evidence="10">
    <location>
        <begin position="400"/>
        <end position="470"/>
    </location>
</feature>
<feature type="region of interest" description="L protein binding" evidence="1">
    <location>
        <begin position="450"/>
        <end position="483"/>
    </location>
</feature>
<feature type="region of interest" description="Interaction with the nucleocapsid (N-RNA)" evidence="6">
    <location>
        <begin position="585"/>
        <end position="604"/>
    </location>
</feature>
<feature type="coiled-coil region" evidence="4">
    <location>
        <begin position="424"/>
        <end position="451"/>
    </location>
</feature>
<feature type="compositionally biased region" description="Polar residues" evidence="5">
    <location>
        <begin position="47"/>
        <end position="61"/>
    </location>
</feature>
<feature type="compositionally biased region" description="Polar residues" evidence="5">
    <location>
        <begin position="74"/>
        <end position="90"/>
    </location>
</feature>
<feature type="compositionally biased region" description="Basic and acidic residues" evidence="5">
    <location>
        <begin position="91"/>
        <end position="101"/>
    </location>
</feature>
<feature type="compositionally biased region" description="Polar residues" evidence="5">
    <location>
        <begin position="129"/>
        <end position="144"/>
    </location>
</feature>
<feature type="compositionally biased region" description="Basic and acidic residues" evidence="5">
    <location>
        <begin position="147"/>
        <end position="163"/>
    </location>
</feature>
<feature type="compositionally biased region" description="Polar residues" evidence="5">
    <location>
        <begin position="197"/>
        <end position="207"/>
    </location>
</feature>
<feature type="compositionally biased region" description="Basic and acidic residues" evidence="5">
    <location>
        <begin position="245"/>
        <end position="267"/>
    </location>
</feature>
<feature type="compositionally biased region" description="Low complexity" evidence="5">
    <location>
        <begin position="277"/>
        <end position="300"/>
    </location>
</feature>
<feature type="compositionally biased region" description="Low complexity" evidence="5">
    <location>
        <begin position="317"/>
        <end position="328"/>
    </location>
</feature>
<feature type="compositionally biased region" description="Basic and acidic residues" evidence="5">
    <location>
        <begin position="330"/>
        <end position="360"/>
    </location>
</feature>
<feature type="sequence conflict" description="In Ref. 4; CAA28429." evidence="11" ref="4">
    <original>P</original>
    <variation>N</variation>
    <location>
        <position position="198"/>
    </location>
</feature>
<feature type="sequence conflict" description="In Ref. 3; AAA66818 and 4; BAA00921." evidence="11" ref="3 4">
    <location>
        <position position="244"/>
    </location>
</feature>
<feature type="sequence conflict" description="In Ref. 3; AAA66818." evidence="11" ref="3">
    <original>Q</original>
    <variation>R</variation>
    <location>
        <position position="316"/>
    </location>
</feature>
<feature type="sequence conflict" description="In Ref. 4; CAA28429." evidence="11" ref="4">
    <original>C</original>
    <variation>S</variation>
    <location>
        <position position="584"/>
    </location>
</feature>
<feature type="helix" evidence="13">
    <location>
        <begin position="22"/>
        <end position="38"/>
    </location>
</feature>
<evidence type="ECO:0000250" key="1">
    <source>
        <dbReference type="UniProtKB" id="P04859"/>
    </source>
</evidence>
<evidence type="ECO:0000250" key="2">
    <source>
        <dbReference type="UniProtKB" id="P06163"/>
    </source>
</evidence>
<evidence type="ECO:0000250" key="3">
    <source>
        <dbReference type="UniProtKB" id="Q77M42"/>
    </source>
</evidence>
<evidence type="ECO:0000255" key="4"/>
<evidence type="ECO:0000256" key="5">
    <source>
        <dbReference type="SAM" id="MobiDB-lite"/>
    </source>
</evidence>
<evidence type="ECO:0000269" key="6">
    <source>
    </source>
</evidence>
<evidence type="ECO:0000269" key="7">
    <source>
    </source>
</evidence>
<evidence type="ECO:0000269" key="8">
    <source>
    </source>
</evidence>
<evidence type="ECO:0000269" key="9">
    <source>
    </source>
</evidence>
<evidence type="ECO:0000269" key="10">
    <source>
    </source>
</evidence>
<evidence type="ECO:0000305" key="11"/>
<evidence type="ECO:0007744" key="12">
    <source>
        <dbReference type="PDB" id="7EV8"/>
    </source>
</evidence>
<evidence type="ECO:0007829" key="13">
    <source>
        <dbReference type="PDB" id="7EV8"/>
    </source>
</evidence>
<sequence length="604" mass="67662">MESDAKNYQIMDSWEEEPRDKSTNISSALNIIEFILSTDPQEDLSENDTINTRTQQLSATICQPEIKPTETSEKVSGSTDKNRQSGSSHECTTEAKDRNIDQETVQGGSGRRSSSDSRAETVVSGGISGSITDSKNGTQNTENIDLNEIRKMDKDSIERKMRQSADVPSEISGSDVIFTTEQSRNSDHGRSLEPISTPDTRSMSVVTAATPDDEEEILMKNSRMKKSSSTHQEDDKRIKKGGGGKGKDWFKKSRDTDNQTSTSDHKPTSKGQKKISKTTTTNTDTKGQTETQTESSETQSPSWNPIIDNNTDRTEQTSTTPPTTTPRSTRTKESIRTNSESKPKTQKTIGKERKDTEESNRFTERAITLLQNLGVIQSTSKLDLYQDKRVVCVANVLNNVDTASKIDFLAGLVIGVSMDNDTKLIQIQNEMLNLKADLKRMDESHRRLIENQREQLSLITSLISNLKIMTERGGKKDQNESNERVSMIKTKLKEEKIKKTRFDPLMEAQGIDKNIPDLYRHAGNTLENDVQVKSEILSSYNESNATRLIPRKVSSTMRSLVAVINNSNLPQSTKQSYINELKHCKSDEEVSELMDMFNEDVNNC</sequence>